<name>ABCBB_RAT</name>
<protein>
    <recommendedName>
        <fullName evidence="18">Bile salt export pump</fullName>
        <ecNumber evidence="10">7.6.2.-</ecNumber>
    </recommendedName>
    <alternativeName>
        <fullName>ATP-binding cassette sub-family B member 11</fullName>
    </alternativeName>
    <alternativeName>
        <fullName evidence="19">Sister of P-glycoprotein</fullName>
    </alternativeName>
</protein>
<sequence>MSDSVILRSVKKFGEENHAFESDGSHNNDKKSRLQDKMKEGDIRVGFFELFRFSSSKDIWLMLMGGVCALLHGMAQPGILIIFGIMTDIFIKYDIERQELEIPGKACVNNTIVWINSSFHQNMTNGTVCGLVDIESEMIKFSGIYAGVGMTVLILGYFQIRLWVITGARQIRRMRKIYFRRIMRMEIGWFDCTSVGELNSRFADDIEKINDAIADQLAHFLQRMSTAMCGLLLGFYRGWKLTLVILAVSPLIGIGAAVIGLSIAKFTELELKAYAKAGSIADEVLSSIRTVAAFGGENKEVERYEKNLVFAQRWGIWKGMVMGFFTGYMWCLIFFCYALAFWYGSTLVLDEEEYTPGTLVQIFLCVILAAMNIGHASSCLEIFSTGCSAATNIFQTIDRQPVIDCMSGDGYKLDRIKGEIEFHNVTFHYPSRPDVKILDNLSMVIKPGETTALVGSSGAGKSTALQLIQRFYDPCEGMVTLDGHDIRSLNIRWLRDQIGIVEQEPVLFSTTIAENIRFGREDATMEDIVQAAKDANAYNFIMALPQQFDTLVGEGGGQMSGGQKQRVAIARALIRNPKILLLDMATSALDNESEARVQEALNKIQHGHTIISVAHRLSTVRAADVIIGFEHGVAVERGTHEELLERKGVYFMLVTLQSQGDNAHKETSIMGKDATEGGTLERTFSRGSYRDSLRASIRQRSKSQLSLLTHDPPLAVADHKSSYKDSKDNDVLVEEVEPAPVRRILKYNIPEWHYILVGSLSAAINGAVTPIYSLLFSQLLGTFSLLDKEQQRSEIHSMCLFFVILGCVSIFTQFLQGYTFAKSGELLTKRLRKFGFKAMLGQDIGWFDDLRNNPGVLTTRLATDASQVQGATGSQVGMMVNSFTNIIAALLIAFFFSWKLSLIITIFFPFLALSGAVQTKMLTGFASQDKQALEKAGQITSEALSNIRTVAGIGVEGRFIKAFEVELQTSYKTAVRKANIYGLCFAFSQGIAFLANSAAYRYGGYLIAYEGLGFSHVFRVVSSVALSATAVGRTFSYTPSYAKAKISAARFFQLLDRKPPINVYSEAGEKWDNFQGKIDFIDCKFTYPSRPDIQVLNGLSVSVNPGQTLAFVGSSGCGKSTSIQLLERFYDPDQGTVMIDGHDSKKVNIQFLRSNIGIVSQEPVLFDCSIMDNIKYGDNTKEISVERAIAAAKQAQLHDFVMSLPEKYETNVGIQGSQLSRGEKQRIAIARAIVRDPKILLLDEATSALDTESEKTVQTALDKAREGRTCIVIAHRLSTIQNSDIIAVVSQGVVIEKGTHEKLMAQKGAYYKLVITGAPIS</sequence>
<gene>
    <name evidence="22" type="primary">Abcb11</name>
    <name evidence="18" type="synonym">Bsep</name>
    <name evidence="19" type="synonym">Spgp</name>
</gene>
<comment type="function">
    <text evidence="9 10 11 12 14 17">Catalyzes the transport of the major hydrophobic bile salts, such as taurine and glycine-conjugated cholic acid across the canalicular membrane of hepatocytes in an ATP-dependent manner, therefore participates in hepatic bile acid homeostasis and consequently to lipid homeostasis through regulation of biliary lipid secretion in a bile salts dependent manner (PubMed:15901796, PubMed:16332456, PubMed:17082223, PubMed:18985798, PubMed:9545351). Transports taurine-conjugated bile salts more rapidly than glycine-conjugated bile salts (PubMed:16332456). Also transports non-bile acid compounds, such as pravastatin and fexofenadine in an ATP-dependent manner and may be involved in their biliary excretion (PubMed:15901796, PubMed:18245269).</text>
</comment>
<comment type="catalytic activity">
    <reaction evidence="10 17">
        <text>cholate(in) + ATP + H2O = cholate(out) + ADP + phosphate + H(+)</text>
        <dbReference type="Rhea" id="RHEA:50048"/>
        <dbReference type="ChEBI" id="CHEBI:15377"/>
        <dbReference type="ChEBI" id="CHEBI:15378"/>
        <dbReference type="ChEBI" id="CHEBI:29747"/>
        <dbReference type="ChEBI" id="CHEBI:30616"/>
        <dbReference type="ChEBI" id="CHEBI:43474"/>
        <dbReference type="ChEBI" id="CHEBI:456216"/>
    </reaction>
    <physiologicalReaction direction="left-to-right" evidence="10">
        <dbReference type="Rhea" id="RHEA:50049"/>
    </physiologicalReaction>
</comment>
<comment type="catalytic activity">
    <reaction evidence="9 10 11 14 17">
        <text>taurocholate(in) + ATP + H2O = taurocholate(out) + ADP + phosphate + H(+)</text>
        <dbReference type="Rhea" id="RHEA:50052"/>
        <dbReference type="ChEBI" id="CHEBI:15377"/>
        <dbReference type="ChEBI" id="CHEBI:15378"/>
        <dbReference type="ChEBI" id="CHEBI:30616"/>
        <dbReference type="ChEBI" id="CHEBI:36257"/>
        <dbReference type="ChEBI" id="CHEBI:43474"/>
        <dbReference type="ChEBI" id="CHEBI:456216"/>
    </reaction>
    <physiologicalReaction direction="left-to-right" evidence="9 10 11 14">
        <dbReference type="Rhea" id="RHEA:50053"/>
    </physiologicalReaction>
</comment>
<comment type="catalytic activity">
    <reaction evidence="10 17">
        <text>glycocholate(in) + ATP + H2O = glycocholate(out) + ADP + phosphate + H(+)</text>
        <dbReference type="Rhea" id="RHEA:50056"/>
        <dbReference type="ChEBI" id="CHEBI:15377"/>
        <dbReference type="ChEBI" id="CHEBI:15378"/>
        <dbReference type="ChEBI" id="CHEBI:29746"/>
        <dbReference type="ChEBI" id="CHEBI:30616"/>
        <dbReference type="ChEBI" id="CHEBI:43474"/>
        <dbReference type="ChEBI" id="CHEBI:456216"/>
    </reaction>
    <physiologicalReaction direction="left-to-right" evidence="10">
        <dbReference type="Rhea" id="RHEA:50057"/>
    </physiologicalReaction>
</comment>
<comment type="catalytic activity">
    <reaction evidence="10">
        <text>glycochenodeoxycholate(in) + ATP + H2O = glycochenodeoxycholate(out) + ADP + phosphate + H(+)</text>
        <dbReference type="Rhea" id="RHEA:50060"/>
        <dbReference type="ChEBI" id="CHEBI:15377"/>
        <dbReference type="ChEBI" id="CHEBI:15378"/>
        <dbReference type="ChEBI" id="CHEBI:30616"/>
        <dbReference type="ChEBI" id="CHEBI:36252"/>
        <dbReference type="ChEBI" id="CHEBI:43474"/>
        <dbReference type="ChEBI" id="CHEBI:456216"/>
    </reaction>
    <physiologicalReaction direction="left-to-right" evidence="10">
        <dbReference type="Rhea" id="RHEA:50061"/>
    </physiologicalReaction>
</comment>
<comment type="catalytic activity">
    <reaction evidence="10 17">
        <text>taurochenodeoxycholate(in) + ATP + H2O = taurochenodeoxycholate(out) + ADP + phosphate + H(+)</text>
        <dbReference type="Rhea" id="RHEA:50064"/>
        <dbReference type="ChEBI" id="CHEBI:9407"/>
        <dbReference type="ChEBI" id="CHEBI:15377"/>
        <dbReference type="ChEBI" id="CHEBI:15378"/>
        <dbReference type="ChEBI" id="CHEBI:30616"/>
        <dbReference type="ChEBI" id="CHEBI:43474"/>
        <dbReference type="ChEBI" id="CHEBI:456216"/>
    </reaction>
    <physiologicalReaction direction="left-to-right" evidence="10">
        <dbReference type="Rhea" id="RHEA:50065"/>
    </physiologicalReaction>
</comment>
<comment type="catalytic activity">
    <reaction evidence="10">
        <text>glycoursodeoxycholate(in) + ATP + H2O = glycoursodeoxycholate(out) + ADP + phosphate + H(+)</text>
        <dbReference type="Rhea" id="RHEA:50068"/>
        <dbReference type="ChEBI" id="CHEBI:15377"/>
        <dbReference type="ChEBI" id="CHEBI:15378"/>
        <dbReference type="ChEBI" id="CHEBI:30616"/>
        <dbReference type="ChEBI" id="CHEBI:43474"/>
        <dbReference type="ChEBI" id="CHEBI:132030"/>
        <dbReference type="ChEBI" id="CHEBI:456216"/>
    </reaction>
    <physiologicalReaction direction="left-to-right" evidence="10">
        <dbReference type="Rhea" id="RHEA:50069"/>
    </physiologicalReaction>
</comment>
<comment type="catalytic activity">
    <reaction evidence="10 17">
        <text>tauroursodeoxycholate(in) + ATP + H2O = tauroursodeoxycholate(out) + ADP + phosphate + H(+)</text>
        <dbReference type="Rhea" id="RHEA:50072"/>
        <dbReference type="ChEBI" id="CHEBI:15377"/>
        <dbReference type="ChEBI" id="CHEBI:15378"/>
        <dbReference type="ChEBI" id="CHEBI:30616"/>
        <dbReference type="ChEBI" id="CHEBI:43474"/>
        <dbReference type="ChEBI" id="CHEBI:132028"/>
        <dbReference type="ChEBI" id="CHEBI:456216"/>
    </reaction>
    <physiologicalReaction direction="left-to-right" evidence="10">
        <dbReference type="Rhea" id="RHEA:50073"/>
    </physiologicalReaction>
</comment>
<comment type="catalytic activity">
    <reaction evidence="10">
        <text>taurodeoxycholate(in) + ATP + H2O = taurodeoxycholate(out) + ADP + phosphate + H(+)</text>
        <dbReference type="Rhea" id="RHEA:50080"/>
        <dbReference type="ChEBI" id="CHEBI:15377"/>
        <dbReference type="ChEBI" id="CHEBI:15378"/>
        <dbReference type="ChEBI" id="CHEBI:30616"/>
        <dbReference type="ChEBI" id="CHEBI:36261"/>
        <dbReference type="ChEBI" id="CHEBI:43474"/>
        <dbReference type="ChEBI" id="CHEBI:456216"/>
    </reaction>
    <physiologicalReaction direction="left-to-right" evidence="10">
        <dbReference type="Rhea" id="RHEA:50081"/>
    </physiologicalReaction>
</comment>
<comment type="catalytic activity">
    <reaction evidence="9">
        <text>pravastatin(in) + ATP + H2O = pravastatin(out) + ADP + phosphate + H(+)</text>
        <dbReference type="Rhea" id="RHEA:63908"/>
        <dbReference type="ChEBI" id="CHEBI:15377"/>
        <dbReference type="ChEBI" id="CHEBI:15378"/>
        <dbReference type="ChEBI" id="CHEBI:30616"/>
        <dbReference type="ChEBI" id="CHEBI:43474"/>
        <dbReference type="ChEBI" id="CHEBI:63660"/>
        <dbReference type="ChEBI" id="CHEBI:456216"/>
    </reaction>
    <physiologicalReaction direction="left-to-right" evidence="21">
        <dbReference type="Rhea" id="RHEA:63909"/>
    </physiologicalReaction>
</comment>
<comment type="activity regulation">
    <text evidence="1 9 10 14">The uptake of taurocholate is inhibited by taurolithocholate sulfate with an IC(50) of 52.9 uM (PubMed:16332456). Pravastatin competitively inhibits the transport of taurocholic acid (PubMed:15901796, PubMed:18985798). Cyclosporin A, glibenclamide, rifampicin and troglitazonestrongly competitively inhibit the transport activity of taurocholate (PubMed:18985798). The canalicular transport activity of taurocholate is strongly dependent on canalicular membrane cholesterol content. The uptake of taurocholate is increased by short- and medium-chain fatty acids. Cholesterol increases transport capacity of taurocholate without affecting the affinity for the substrate (By similarity).</text>
</comment>
<comment type="biophysicochemical properties">
    <kinetics>
        <KM evidence="10">9.7 uM for taurocholate</KM>
        <KM evidence="10">25.7 uM for glycocholate</KM>
        <KM evidence="10">10.2 uM for taurochenodeoxycholate</KM>
        <KM evidence="10">5.6 uM for glycochenodeoxycholate</KM>
        <KM evidence="14">22.2 uM for taurocholate</KM>
        <Vmax evidence="10">2200.0 pmol/min/mg enzyme for taurocholate transport</Vmax>
        <Vmax evidence="14">237.0 pmol/min/mg enzyme for taurocholate transport</Vmax>
    </kinetics>
</comment>
<comment type="subunit">
    <text evidence="8 15">Interacts with HAX1 (PubMed:15159385). Interacts with the adapter protein complex 2 (AP-2) throught AP2A2 or AP2A1; this interaction regulates cell membrane expression of ABCB11 through its internalization in a clathrin-dependent manner and its subsequent degradation (PubMed:22262466).</text>
</comment>
<comment type="interaction">
    <interactant intactId="EBI-930036">
        <id>O70127</id>
    </interactant>
    <interactant intactId="EBI-930005">
        <id>Q7TSE9</id>
        <label>Hax1</label>
    </interactant>
    <organismsDiffer>false</organismsDiffer>
    <experiments>5</experiments>
</comment>
<comment type="subcellular location">
    <subcellularLocation>
        <location evidence="6 11 17">Apical cell membrane</location>
        <topology evidence="3">Multi-pass membrane protein</topology>
    </subcellularLocation>
    <subcellularLocation>
        <location evidence="6 7">Recycling endosome membrane</location>
        <topology evidence="3">Multi-pass membrane protein</topology>
    </subcellularLocation>
    <subcellularLocation>
        <location evidence="6">Endosome</location>
    </subcellularLocation>
    <subcellularLocation>
        <location evidence="7 15 16">Cell membrane</location>
        <topology evidence="3">Multi-pass membrane protein</topology>
    </subcellularLocation>
    <text evidence="1 6 7 15 16">Internalized at the canalicular membrane through interaction with the adapter protein complex 2 (AP-2) (PubMed:22262466). At steady state, localizes in the canalicular membrane but is also present in recycling endosomes. ABCB11 constantly and rapidly exchanges between the two sites through tubulo-vesicles carriers that move along microtubules (PubMed:11113123, PubMed:15121884). Microtubule-dependent trafficking of ABCB11 is enhanced by taurocholate and cAMP and regulated by STK11 through a PKA-mediated pathway (PubMed:11113123, PubMed:24643070). Trafficking of newly synthesized ABCB11 through endosomal compartment to the bile canalicular membrane is accelerated by cAMP but not by taurocholate (PubMed:11113123). Cell membrane expression is up-regulated by short- and medium-chain fatty acids (By similarity).</text>
</comment>
<comment type="tissue specificity">
    <text evidence="17">Expressed predominantly, if not exclusively in the liver, where it was further localized to the canalicular microvilli and to subcanalicular vesicles of the hepatocytes by in situ.</text>
</comment>
<comment type="domain">
    <text>Multifunctional polypeptide with two homologous halves, each containing a hydrophobic membrane-anchoring domain and an ATP binding cassette (ABC) domain.</text>
</comment>
<comment type="PTM">
    <text evidence="13">Ubiquitinated; short-chain ubiquitination regulates cell-Surface expression of ABCB11.</text>
</comment>
<comment type="PTM">
    <text evidence="1">N-glycosylated.</text>
</comment>
<comment type="similarity">
    <text evidence="20">Belongs to the ABC transporter superfamily. ABCB family. Multidrug resistance exporter (TC 3.A.1.201) subfamily.</text>
</comment>
<keyword id="KW-0067">ATP-binding</keyword>
<keyword id="KW-1003">Cell membrane</keyword>
<keyword id="KW-0967">Endosome</keyword>
<keyword id="KW-0325">Glycoprotein</keyword>
<keyword id="KW-0445">Lipid transport</keyword>
<keyword id="KW-0472">Membrane</keyword>
<keyword id="KW-0547">Nucleotide-binding</keyword>
<keyword id="KW-0597">Phosphoprotein</keyword>
<keyword id="KW-1185">Reference proteome</keyword>
<keyword id="KW-0677">Repeat</keyword>
<keyword id="KW-1278">Translocase</keyword>
<keyword id="KW-0812">Transmembrane</keyword>
<keyword id="KW-1133">Transmembrane helix</keyword>
<keyword id="KW-0813">Transport</keyword>
<keyword id="KW-0832">Ubl conjugation</keyword>
<reference key="1">
    <citation type="journal article" date="1998" name="J. Biol. Chem.">
        <title>The sister of P-glycoprotein represents the canalicular bile salt export pump of mammalian liver.</title>
        <authorList>
            <person name="Gerloff T."/>
            <person name="Stieger B."/>
            <person name="Hagenbuch B."/>
            <person name="Madon J."/>
            <person name="Landmann L."/>
            <person name="Roth J."/>
            <person name="Hofmann A.F."/>
            <person name="Meier P.J."/>
        </authorList>
    </citation>
    <scope>NUCLEOTIDE SEQUENCE [MRNA]</scope>
    <scope>CATALYTIC ACTIVITY</scope>
    <scope>FUNCTION</scope>
    <scope>SUBCELLULAR LOCATION</scope>
    <scope>TISSUE SPECIFICITY</scope>
    <source>
        <strain>Sprague-Dawley</strain>
        <tissue>Liver</tissue>
    </source>
</reference>
<reference key="2">
    <citation type="journal article" date="2001" name="J. Biol. Chem.">
        <title>Transporters on demand: intrahepatic pools of canalicular ATP binding cassette transporters in rat liver.</title>
        <authorList>
            <person name="Kipp H."/>
            <person name="Pichetshote N."/>
            <person name="Arias I.M."/>
        </authorList>
    </citation>
    <scope>SUBCELLULAR LOCATION</scope>
</reference>
<reference key="3">
    <citation type="journal article" date="2004" name="J. Biol. Chem.">
        <title>Identification of HAX-1 as a protein that binds bile salt export protein and regulates its abundance in the apical membrane of Madin-Darby canine kidney cells.</title>
        <authorList>
            <person name="Ortiz D.F."/>
            <person name="Moseley J."/>
            <person name="Calderon G."/>
            <person name="Swift A.L."/>
            <person name="Li S."/>
            <person name="Arias I.M."/>
        </authorList>
    </citation>
    <scope>INTERACTION WITH HAX1</scope>
</reference>
<reference key="4">
    <citation type="journal article" date="2004" name="Mol. Biol. Cell">
        <title>Intracellular trafficking of bile salt export pump (ABCB11) in polarized hepatic cells: constitutive cycling between the canalicular membrane and rab11-positive endosomes.</title>
        <authorList>
            <person name="Wakabayashi Y."/>
            <person name="Lippincott-Schwartz J."/>
            <person name="Arias I.M."/>
        </authorList>
    </citation>
    <scope>SUBCELLULAR LOCATION</scope>
</reference>
<reference key="5">
    <citation type="journal article" date="2005" name="Biochim. Biophys. Acta">
        <title>Transport by vesicles of glycine- and taurine-conjugated bile salts and taurolithocholate 3-sulfate: a comparison of human BSEP with rat Bsep.</title>
        <authorList>
            <person name="Hayashi H."/>
            <person name="Takada T."/>
            <person name="Suzuki H."/>
            <person name="Onuki R."/>
            <person name="Hofmann A.F."/>
            <person name="Sugiyama Y."/>
        </authorList>
    </citation>
    <scope>CATALYTIC ACTIVITY</scope>
    <scope>FUNCTION</scope>
    <scope>BIOPHYSICOCHEMICAL PROPERTIES</scope>
    <scope>ACTIVITY REGULATION</scope>
</reference>
<reference key="6">
    <citation type="journal article" date="2005" name="J. Pharmacol. Exp. Ther.">
        <title>Bile salt export pump (BSEP/ABCB11) can transport a nonbile acid substrate, pravastatin.</title>
        <authorList>
            <person name="Hirano M."/>
            <person name="Maeda K."/>
            <person name="Hayashi H."/>
            <person name="Kusuhara H."/>
            <person name="Sugiyama Y."/>
        </authorList>
    </citation>
    <scope>CATALYTIC ACTIVITY</scope>
    <scope>FUNCTION</scope>
    <scope>ACTIVITY REGULATION</scope>
</reference>
<reference key="7">
    <citation type="journal article" date="2007" name="Am. J. Physiol.">
        <title>Two N-linked glycans are required to maintain the transport activity of the bile salt export pump (ABCB11) in MDCK II cells.</title>
        <authorList>
            <person name="Mochizuki K."/>
            <person name="Kagawa T."/>
            <person name="Numari A."/>
            <person name="Harris M.J."/>
            <person name="Itoh J."/>
            <person name="Watanabe N."/>
            <person name="Mine T."/>
            <person name="Arias I.M."/>
        </authorList>
    </citation>
    <scope>GLYCOSYLATION AT ASN-109; ASN-116; ASN-122 AND ASN-125</scope>
    <scope>MUTAGENESIS OF ASN-109; ASN-116; ASN-122 AND ASN-125</scope>
    <scope>CATALYTIC ACTIVITY</scope>
    <scope>FUNCTION</scope>
    <scope>SUBCELLULAR LOCATION</scope>
</reference>
<reference key="8">
    <citation type="journal article" date="2008" name="Biopharm. Drug Dispos.">
        <title>Cloning of the dog bile salt export pump (BSEP; ABCB11) and functional comparison with the human and rat proteins.</title>
        <authorList>
            <person name="Yabuuchi H."/>
            <person name="Tanaka K."/>
            <person name="Maeda M."/>
            <person name="Takemura M."/>
            <person name="Oka M."/>
            <person name="Ohashi R."/>
            <person name="Tamai I."/>
        </authorList>
    </citation>
    <scope>CATALYTIC ACTIVITY</scope>
    <scope>FUNCTION</scope>
    <scope>BIOPHYSICOCHEMICAL PROPERTIES</scope>
    <scope>ACTIVITY REGULATION</scope>
    <source>
        <tissue>Liver</tissue>
    </source>
</reference>
<reference key="9">
    <citation type="journal article" date="2008" name="Mol. Pharmacol.">
        <title>Involvement of multiple efflux transporters in hepatic disposition of fexofenadine.</title>
        <authorList>
            <person name="Matsushima S."/>
            <person name="Maeda K."/>
            <person name="Hayashi H."/>
            <person name="Debori Y."/>
            <person name="Schinkel A.H."/>
            <person name="Schuetz J.D."/>
            <person name="Kusuhara H."/>
            <person name="Sugiyama Y."/>
        </authorList>
    </citation>
    <scope>FUNCTION</scope>
    <scope>CATALYTIC ACTIVITY</scope>
</reference>
<reference key="10">
    <citation type="journal article" date="2009" name="Mol. Pharmacol.">
        <title>Short-chain ubiquitination is associated with the degradation rate of a cell-surface-resident bile salt export pump (BSEP/ABCB11).</title>
        <authorList>
            <person name="Hayashi H."/>
            <person name="Sugiyama Y."/>
        </authorList>
    </citation>
    <scope>UBIQUITINATION</scope>
</reference>
<reference key="11">
    <citation type="journal article" date="2012" name="Hepatology">
        <title>AP2 adaptor complex mediates bile salt export pump internalization and modulates its hepatocanalicular expression and transport function.</title>
        <authorList>
            <person name="Hayashi H."/>
            <person name="Inamura K."/>
            <person name="Aida K."/>
            <person name="Naoi S."/>
            <person name="Horikawa R."/>
            <person name="Nagasaka H."/>
            <person name="Takatani T."/>
            <person name="Fukushima T."/>
            <person name="Hattori A."/>
            <person name="Yabuki T."/>
            <person name="Horii I."/>
            <person name="Sugiyama Y."/>
        </authorList>
    </citation>
    <scope>SUBCELLULAR LOCATION</scope>
    <scope>MUTAGENESIS OF TYR-1311</scope>
</reference>
<reference key="12">
    <citation type="journal article" date="2012" name="Nat. Commun.">
        <title>Quantitative maps of protein phosphorylation sites across 14 different rat organs and tissues.</title>
        <authorList>
            <person name="Lundby A."/>
            <person name="Secher A."/>
            <person name="Lage K."/>
            <person name="Nordsborg N.B."/>
            <person name="Dmytriyev A."/>
            <person name="Lundby C."/>
            <person name="Olsen J.V."/>
        </authorList>
    </citation>
    <scope>PHOSPHORYLATION [LARGE SCALE ANALYSIS] AT SER-703; SER-706 AND SER-1321</scope>
    <scope>IDENTIFICATION BY MASS SPECTROMETRY [LARGE SCALE ANALYSIS]</scope>
</reference>
<reference key="13">
    <citation type="journal article" date="2014" name="PLoS ONE">
        <title>LKB1/AMPK and PKA control ABCB11 trafficking and polarization in hepatocytes.</title>
        <authorList>
            <person name="Homolya L."/>
            <person name="Fu D."/>
            <person name="Sengupta P."/>
            <person name="Jarnik M."/>
            <person name="Gillet J.P."/>
            <person name="Vitale-Cross L."/>
            <person name="Gutkind J.S."/>
            <person name="Lippincott-Schwartz J."/>
            <person name="Arias I.M."/>
        </authorList>
    </citation>
    <scope>SUBCELLULAR LOCATION</scope>
</reference>
<feature type="chain" id="PRO_0000093299" description="Bile salt export pump">
    <location>
        <begin position="1"/>
        <end position="1321"/>
    </location>
</feature>
<feature type="topological domain" description="Cytoplasmic" evidence="3">
    <location>
        <begin position="1"/>
        <end position="62"/>
    </location>
</feature>
<feature type="transmembrane region" description="Helical" evidence="5">
    <location>
        <begin position="63"/>
        <end position="83"/>
    </location>
</feature>
<feature type="topological domain" description="Extracellular" evidence="3">
    <location>
        <begin position="84"/>
        <end position="147"/>
    </location>
</feature>
<feature type="transmembrane region" description="Helical" evidence="5">
    <location>
        <begin position="148"/>
        <end position="168"/>
    </location>
</feature>
<feature type="topological domain" description="Cytoplasmic" evidence="3">
    <location>
        <begin position="169"/>
        <end position="215"/>
    </location>
</feature>
<feature type="transmembrane region" description="Helical" evidence="5">
    <location>
        <begin position="216"/>
        <end position="236"/>
    </location>
</feature>
<feature type="topological domain" description="Extracellular" evidence="3">
    <location>
        <begin position="237"/>
        <end position="240"/>
    </location>
</feature>
<feature type="transmembrane region" description="Helical" evidence="5">
    <location>
        <begin position="241"/>
        <end position="261"/>
    </location>
</feature>
<feature type="topological domain" description="Cytoplasmic" evidence="3">
    <location>
        <begin position="262"/>
        <end position="319"/>
    </location>
</feature>
<feature type="transmembrane region" description="Helical" evidence="5">
    <location>
        <begin position="320"/>
        <end position="340"/>
    </location>
</feature>
<feature type="topological domain" description="Extracellular" evidence="3">
    <location>
        <begin position="341"/>
        <end position="353"/>
    </location>
</feature>
<feature type="transmembrane region" description="Helical" evidence="5">
    <location>
        <begin position="354"/>
        <end position="374"/>
    </location>
</feature>
<feature type="topological domain" description="Cytoplasmic" evidence="3">
    <location>
        <begin position="375"/>
        <end position="755"/>
    </location>
</feature>
<feature type="transmembrane region" description="Helical" evidence="5">
    <location>
        <begin position="756"/>
        <end position="776"/>
    </location>
</feature>
<feature type="topological domain" description="Extracellular" evidence="3">
    <location>
        <begin position="777"/>
        <end position="794"/>
    </location>
</feature>
<feature type="transmembrane region" description="Helical" evidence="5">
    <location>
        <begin position="795"/>
        <end position="815"/>
    </location>
</feature>
<feature type="topological domain" description="Cytoplasmic" evidence="3">
    <location>
        <begin position="816"/>
        <end position="869"/>
    </location>
</feature>
<feature type="transmembrane region" description="Helical" evidence="5">
    <location>
        <begin position="870"/>
        <end position="890"/>
    </location>
</feature>
<feature type="transmembrane region" description="Helical" evidence="5">
    <location>
        <begin position="891"/>
        <end position="911"/>
    </location>
</feature>
<feature type="topological domain" description="Cytoplasmic" evidence="3">
    <location>
        <begin position="912"/>
        <end position="979"/>
    </location>
</feature>
<feature type="transmembrane region" description="Helical" evidence="5">
    <location>
        <begin position="980"/>
        <end position="1000"/>
    </location>
</feature>
<feature type="topological domain" description="Extracellular" evidence="3">
    <location>
        <begin position="1001"/>
        <end position="1011"/>
    </location>
</feature>
<feature type="transmembrane region" description="Helical" evidence="5">
    <location>
        <begin position="1012"/>
        <end position="1032"/>
    </location>
</feature>
<feature type="topological domain" description="Cytoplasmic" evidence="3">
    <location>
        <begin position="1033"/>
        <end position="1321"/>
    </location>
</feature>
<feature type="domain" description="ABC transmembrane type-1 1" evidence="5">
    <location>
        <begin position="62"/>
        <end position="385"/>
    </location>
</feature>
<feature type="domain" description="ABC transporter 1" evidence="4">
    <location>
        <begin position="420"/>
        <end position="656"/>
    </location>
</feature>
<feature type="domain" description="ABC transmembrane type-1 2" evidence="5">
    <location>
        <begin position="755"/>
        <end position="1043"/>
    </location>
</feature>
<feature type="domain" description="ABC transporter 2" evidence="4">
    <location>
        <begin position="1078"/>
        <end position="1316"/>
    </location>
</feature>
<feature type="region of interest" description="Interaction with HAX1" evidence="8">
    <location>
        <begin position="651"/>
        <end position="674"/>
    </location>
</feature>
<feature type="binding site" evidence="4">
    <location>
        <begin position="455"/>
        <end position="462"/>
    </location>
    <ligand>
        <name>ATP</name>
        <dbReference type="ChEBI" id="CHEBI:30616"/>
        <label>1</label>
    </ligand>
</feature>
<feature type="binding site" evidence="4">
    <location>
        <begin position="1113"/>
        <end position="1120"/>
    </location>
    <ligand>
        <name>ATP</name>
        <dbReference type="ChEBI" id="CHEBI:30616"/>
        <label>2</label>
    </ligand>
</feature>
<feature type="modified residue" description="Phosphothreonine" evidence="1">
    <location>
        <position position="586"/>
    </location>
</feature>
<feature type="modified residue" description="Phosphoserine" evidence="1">
    <location>
        <position position="587"/>
    </location>
</feature>
<feature type="modified residue" description="Phosphoserine" evidence="2">
    <location>
        <position position="692"/>
    </location>
</feature>
<feature type="modified residue" description="Phosphoserine" evidence="23">
    <location>
        <position position="703"/>
    </location>
</feature>
<feature type="modified residue" description="Phosphoserine" evidence="23">
    <location>
        <position position="706"/>
    </location>
</feature>
<feature type="modified residue" description="Phosphoserine" evidence="23">
    <location>
        <position position="1321"/>
    </location>
</feature>
<feature type="glycosylation site" description="N-linked (GlcNAc...) asparagine" evidence="3 11">
    <location>
        <position position="109"/>
    </location>
</feature>
<feature type="glycosylation site" description="N-linked (GlcNAc...) asparagine" evidence="3 11">
    <location>
        <position position="116"/>
    </location>
</feature>
<feature type="glycosylation site" description="N-linked (GlcNAc...) asparagine" evidence="3 11">
    <location>
        <position position="122"/>
    </location>
</feature>
<feature type="glycosylation site" description="N-linked (GlcNAc...) asparagine" evidence="3 11">
    <location>
        <position position="125"/>
    </location>
</feature>
<feature type="mutagenesis site" description="Impairs N-glycosylation; when associated with Q-116; Q-122 and Q-125. Significantly decreases taurocholate; when associated with Q-116; Q-122 and Q-125. Significantly decreases protein expression; when associated with Q-116; Q-122 and Q-125. Affects protein localization at the apical membrane; when associated with Q-116; Q-122 and Q-125. Does not affect protein localization at the apical membrane." evidence="11">
    <original>N</original>
    <variation>Q</variation>
    <location>
        <position position="109"/>
    </location>
</feature>
<feature type="mutagenesis site" description="Impairs N-glycosylation; when associated with Q-109; Q-122 and Q-125. Significantly decreases taurocholate; when associated with Q-109; Q-122 and Q-125. Significantly decreases protein expression; when associated with Q-109; Q-122 and Q-125. Affects protein localization at the apical membrane; when associated with Q-109; Q-122 and Q-125. Does not affect protein localization at the apical membrane; when associated with Q-109; Q-122 and Q-125." evidence="11">
    <original>N</original>
    <variation>Q</variation>
    <location>
        <position position="116"/>
    </location>
</feature>
<feature type="mutagenesis site" description="Impairs N-glycosylation; when associated with Q-109; Q-116 and Q-125. Significantly decreases taurocholate; when associated with Q-109; Q-116 and Q-125. Significantly decreases protein expression; when associated with Q-109; Q-116 and Q-125. Affects protein localization at the apical membrane; when associated with Q-109; Q-116 and Q-125." evidence="11">
    <original>N</original>
    <variation>Q</variation>
    <location>
        <position position="122"/>
    </location>
</feature>
<feature type="mutagenesis site" description="Impairs N-glycosylation; when associated with Q-109; Q-116 and Q-122. Significantly decreases taurocholate; when associated with Q-109; Q-116 and Q-122. Significantly decreases protein expression; when associated with Q-109; Q-116 and Q-122. Affects protein localization at the apical membrane;when associated with Q-109; Q-116 and Q-122." evidence="11">
    <original>N</original>
    <variation>Q</variation>
    <location>
        <position position="125"/>
    </location>
</feature>
<feature type="mutagenesis site" description="Deacreases ABCB11 internalization." evidence="15">
    <original>Y</original>
    <variation>A</variation>
    <location>
        <position position="1311"/>
    </location>
</feature>
<accession>O70127</accession>
<evidence type="ECO:0000250" key="1">
    <source>
        <dbReference type="UniProtKB" id="O95342"/>
    </source>
</evidence>
<evidence type="ECO:0000250" key="2">
    <source>
        <dbReference type="UniProtKB" id="Q9QY30"/>
    </source>
</evidence>
<evidence type="ECO:0000255" key="3"/>
<evidence type="ECO:0000255" key="4">
    <source>
        <dbReference type="PROSITE-ProRule" id="PRU00434"/>
    </source>
</evidence>
<evidence type="ECO:0000255" key="5">
    <source>
        <dbReference type="PROSITE-ProRule" id="PRU00441"/>
    </source>
</evidence>
<evidence type="ECO:0000269" key="6">
    <source>
    </source>
</evidence>
<evidence type="ECO:0000269" key="7">
    <source>
    </source>
</evidence>
<evidence type="ECO:0000269" key="8">
    <source>
    </source>
</evidence>
<evidence type="ECO:0000269" key="9">
    <source>
    </source>
</evidence>
<evidence type="ECO:0000269" key="10">
    <source>
    </source>
</evidence>
<evidence type="ECO:0000269" key="11">
    <source>
    </source>
</evidence>
<evidence type="ECO:0000269" key="12">
    <source>
    </source>
</evidence>
<evidence type="ECO:0000269" key="13">
    <source>
    </source>
</evidence>
<evidence type="ECO:0000269" key="14">
    <source>
    </source>
</evidence>
<evidence type="ECO:0000269" key="15">
    <source>
    </source>
</evidence>
<evidence type="ECO:0000269" key="16">
    <source>
    </source>
</evidence>
<evidence type="ECO:0000269" key="17">
    <source>
    </source>
</evidence>
<evidence type="ECO:0000303" key="18">
    <source>
    </source>
</evidence>
<evidence type="ECO:0000303" key="19">
    <source>
    </source>
</evidence>
<evidence type="ECO:0000305" key="20"/>
<evidence type="ECO:0000305" key="21">
    <source>
    </source>
</evidence>
<evidence type="ECO:0000312" key="22">
    <source>
        <dbReference type="RGD" id="619930"/>
    </source>
</evidence>
<evidence type="ECO:0007744" key="23">
    <source>
    </source>
</evidence>
<proteinExistence type="evidence at protein level"/>
<dbReference type="EC" id="7.6.2.-" evidence="10"/>
<dbReference type="EMBL" id="U69487">
    <property type="protein sequence ID" value="AAC40084.1"/>
    <property type="molecule type" value="mRNA"/>
</dbReference>
<dbReference type="PIR" id="T42842">
    <property type="entry name" value="T42842"/>
</dbReference>
<dbReference type="RefSeq" id="NP_001418402.1">
    <property type="nucleotide sequence ID" value="NM_001431473.1"/>
</dbReference>
<dbReference type="RefSeq" id="NP_113948.1">
    <property type="nucleotide sequence ID" value="NM_031760.2"/>
</dbReference>
<dbReference type="RefSeq" id="XP_038961860.1">
    <property type="nucleotide sequence ID" value="XM_039105932.2"/>
</dbReference>
<dbReference type="SMR" id="O70127"/>
<dbReference type="BioGRID" id="249756">
    <property type="interactions" value="1"/>
</dbReference>
<dbReference type="FunCoup" id="O70127">
    <property type="interactions" value="64"/>
</dbReference>
<dbReference type="IntAct" id="O70127">
    <property type="interactions" value="2"/>
</dbReference>
<dbReference type="STRING" id="10116.ENSRNOP00000064279"/>
<dbReference type="BindingDB" id="O70127"/>
<dbReference type="ChEMBL" id="CHEMBL2073674"/>
<dbReference type="DrugCentral" id="O70127"/>
<dbReference type="SwissLipids" id="SLP:000001598"/>
<dbReference type="GlyCosmos" id="O70127">
    <property type="glycosylation" value="4 sites, No reported glycans"/>
</dbReference>
<dbReference type="GlyGen" id="O70127">
    <property type="glycosylation" value="4 sites"/>
</dbReference>
<dbReference type="iPTMnet" id="O70127"/>
<dbReference type="PhosphoSitePlus" id="O70127"/>
<dbReference type="PaxDb" id="10116-ENSRNOP00000064279"/>
<dbReference type="Ensembl" id="ENSRNOT00000075107.3">
    <property type="protein sequence ID" value="ENSRNOP00000064279.3"/>
    <property type="gene ID" value="ENSRNOG00000050860.3"/>
</dbReference>
<dbReference type="GeneID" id="83569"/>
<dbReference type="KEGG" id="rno:83569"/>
<dbReference type="AGR" id="RGD:619930"/>
<dbReference type="CTD" id="8647"/>
<dbReference type="RGD" id="619930">
    <property type="gene designation" value="Abcb11"/>
</dbReference>
<dbReference type="eggNOG" id="KOG0055">
    <property type="taxonomic scope" value="Eukaryota"/>
</dbReference>
<dbReference type="GeneTree" id="ENSGT00940000157564"/>
<dbReference type="InParanoid" id="O70127"/>
<dbReference type="OMA" id="GFGQEEQ"/>
<dbReference type="OrthoDB" id="49911at9989"/>
<dbReference type="PhylomeDB" id="O70127"/>
<dbReference type="Reactome" id="R-RNO-159418">
    <property type="pathway name" value="Recycling of bile acids and salts"/>
</dbReference>
<dbReference type="Reactome" id="R-RNO-193368">
    <property type="pathway name" value="Synthesis of bile acids and bile salts via 7alpha-hydroxycholesterol"/>
</dbReference>
<dbReference type="PRO" id="PR:O70127"/>
<dbReference type="Proteomes" id="UP000002494">
    <property type="component" value="Chromosome 3"/>
</dbReference>
<dbReference type="GO" id="GO:0045177">
    <property type="term" value="C:apical part of cell"/>
    <property type="evidence" value="ECO:0000266"/>
    <property type="project" value="RGD"/>
</dbReference>
<dbReference type="GO" id="GO:0016324">
    <property type="term" value="C:apical plasma membrane"/>
    <property type="evidence" value="ECO:0000314"/>
    <property type="project" value="UniProtKB"/>
</dbReference>
<dbReference type="GO" id="GO:0009986">
    <property type="term" value="C:cell surface"/>
    <property type="evidence" value="ECO:0000250"/>
    <property type="project" value="UniProtKB"/>
</dbReference>
<dbReference type="GO" id="GO:0005768">
    <property type="term" value="C:endosome"/>
    <property type="evidence" value="ECO:0000314"/>
    <property type="project" value="UniProtKB"/>
</dbReference>
<dbReference type="GO" id="GO:0000139">
    <property type="term" value="C:Golgi membrane"/>
    <property type="evidence" value="ECO:0000314"/>
    <property type="project" value="RGD"/>
</dbReference>
<dbReference type="GO" id="GO:0046581">
    <property type="term" value="C:intercellular canaliculus"/>
    <property type="evidence" value="ECO:0000266"/>
    <property type="project" value="RGD"/>
</dbReference>
<dbReference type="GO" id="GO:0046691">
    <property type="term" value="C:intracellular canaliculus"/>
    <property type="evidence" value="ECO:0000314"/>
    <property type="project" value="UniProtKB"/>
</dbReference>
<dbReference type="GO" id="GO:0016020">
    <property type="term" value="C:membrane"/>
    <property type="evidence" value="ECO:0000266"/>
    <property type="project" value="RGD"/>
</dbReference>
<dbReference type="GO" id="GO:0005886">
    <property type="term" value="C:plasma membrane"/>
    <property type="evidence" value="ECO:0000314"/>
    <property type="project" value="UniProtKB"/>
</dbReference>
<dbReference type="GO" id="GO:0055037">
    <property type="term" value="C:recycling endosome"/>
    <property type="evidence" value="ECO:0000314"/>
    <property type="project" value="UniProtKB"/>
</dbReference>
<dbReference type="GO" id="GO:0055038">
    <property type="term" value="C:recycling endosome membrane"/>
    <property type="evidence" value="ECO:0000315"/>
    <property type="project" value="UniProtKB"/>
</dbReference>
<dbReference type="GO" id="GO:0015432">
    <property type="term" value="F:ABC-type bile acid transporter activity"/>
    <property type="evidence" value="ECO:0000314"/>
    <property type="project" value="UniProtKB"/>
</dbReference>
<dbReference type="GO" id="GO:0008559">
    <property type="term" value="F:ABC-type xenobiotic transporter activity"/>
    <property type="evidence" value="ECO:0000315"/>
    <property type="project" value="UniProtKB"/>
</dbReference>
<dbReference type="GO" id="GO:0005524">
    <property type="term" value="F:ATP binding"/>
    <property type="evidence" value="ECO:0007669"/>
    <property type="project" value="UniProtKB-KW"/>
</dbReference>
<dbReference type="GO" id="GO:0016887">
    <property type="term" value="F:ATP hydrolysis activity"/>
    <property type="evidence" value="ECO:0007669"/>
    <property type="project" value="InterPro"/>
</dbReference>
<dbReference type="GO" id="GO:0015125">
    <property type="term" value="F:bile acid transmembrane transporter activity"/>
    <property type="evidence" value="ECO:0000315"/>
    <property type="project" value="UniProtKB"/>
</dbReference>
<dbReference type="GO" id="GO:0015126">
    <property type="term" value="F:canalicular bile acid transmembrane transporter activity"/>
    <property type="evidence" value="ECO:0000314"/>
    <property type="project" value="RGD"/>
</dbReference>
<dbReference type="GO" id="GO:0015144">
    <property type="term" value="F:carbohydrate transmembrane transporter activity"/>
    <property type="evidence" value="ECO:0000314"/>
    <property type="project" value="RGD"/>
</dbReference>
<dbReference type="GO" id="GO:0015721">
    <property type="term" value="P:bile acid and bile salt transport"/>
    <property type="evidence" value="ECO:0000314"/>
    <property type="project" value="UniProtKB"/>
</dbReference>
<dbReference type="GO" id="GO:0008206">
    <property type="term" value="P:bile acid metabolic process"/>
    <property type="evidence" value="ECO:0000314"/>
    <property type="project" value="UniProtKB"/>
</dbReference>
<dbReference type="GO" id="GO:0015722">
    <property type="term" value="P:canalicular bile acid transport"/>
    <property type="evidence" value="ECO:0000314"/>
    <property type="project" value="RGD"/>
</dbReference>
<dbReference type="GO" id="GO:0071466">
    <property type="term" value="P:cellular response to xenobiotic stimulus"/>
    <property type="evidence" value="ECO:0000270"/>
    <property type="project" value="RGD"/>
</dbReference>
<dbReference type="GO" id="GO:0042632">
    <property type="term" value="P:cholesterol homeostasis"/>
    <property type="evidence" value="ECO:0000250"/>
    <property type="project" value="UniProtKB"/>
</dbReference>
<dbReference type="GO" id="GO:0006631">
    <property type="term" value="P:fatty acid metabolic process"/>
    <property type="evidence" value="ECO:0000250"/>
    <property type="project" value="UniProtKB"/>
</dbReference>
<dbReference type="GO" id="GO:0055088">
    <property type="term" value="P:lipid homeostasis"/>
    <property type="evidence" value="ECO:0000250"/>
    <property type="project" value="UniProtKB"/>
</dbReference>
<dbReference type="GO" id="GO:0055091">
    <property type="term" value="P:phospholipid homeostasis"/>
    <property type="evidence" value="ECO:0000250"/>
    <property type="project" value="UniProtKB"/>
</dbReference>
<dbReference type="GO" id="GO:0120189">
    <property type="term" value="P:positive regulation of bile acid secretion"/>
    <property type="evidence" value="ECO:0000250"/>
    <property type="project" value="UniProtKB"/>
</dbReference>
<dbReference type="GO" id="GO:0016567">
    <property type="term" value="P:protein ubiquitination"/>
    <property type="evidence" value="ECO:0000315"/>
    <property type="project" value="UniProtKB"/>
</dbReference>
<dbReference type="GO" id="GO:1904251">
    <property type="term" value="P:regulation of bile acid metabolic process"/>
    <property type="evidence" value="ECO:0000250"/>
    <property type="project" value="UniProtKB"/>
</dbReference>
<dbReference type="GO" id="GO:0031998">
    <property type="term" value="P:regulation of fatty acid beta-oxidation"/>
    <property type="evidence" value="ECO:0000250"/>
    <property type="project" value="UniProtKB"/>
</dbReference>
<dbReference type="GO" id="GO:0043627">
    <property type="term" value="P:response to estrogen"/>
    <property type="evidence" value="ECO:0000270"/>
    <property type="project" value="RGD"/>
</dbReference>
<dbReference type="GO" id="GO:0045471">
    <property type="term" value="P:response to ethanol"/>
    <property type="evidence" value="ECO:0000270"/>
    <property type="project" value="RGD"/>
</dbReference>
<dbReference type="GO" id="GO:0006979">
    <property type="term" value="P:response to oxidative stress"/>
    <property type="evidence" value="ECO:0000270"/>
    <property type="project" value="RGD"/>
</dbReference>
<dbReference type="GO" id="GO:0009410">
    <property type="term" value="P:response to xenobiotic stimulus"/>
    <property type="evidence" value="ECO:0000315"/>
    <property type="project" value="RGD"/>
</dbReference>
<dbReference type="GO" id="GO:0055085">
    <property type="term" value="P:transmembrane transport"/>
    <property type="evidence" value="ECO:0000314"/>
    <property type="project" value="RGD"/>
</dbReference>
<dbReference type="GO" id="GO:0046618">
    <property type="term" value="P:xenobiotic export from cell"/>
    <property type="evidence" value="ECO:0000315"/>
    <property type="project" value="UniProtKB"/>
</dbReference>
<dbReference type="GO" id="GO:0006805">
    <property type="term" value="P:xenobiotic metabolic process"/>
    <property type="evidence" value="ECO:0000315"/>
    <property type="project" value="UniProtKB"/>
</dbReference>
<dbReference type="GO" id="GO:0006855">
    <property type="term" value="P:xenobiotic transmembrane transport"/>
    <property type="evidence" value="ECO:0000315"/>
    <property type="project" value="UniProtKB"/>
</dbReference>
<dbReference type="CDD" id="cd18577">
    <property type="entry name" value="ABC_6TM_Pgp_ABCB1_D1_like"/>
    <property type="match status" value="1"/>
</dbReference>
<dbReference type="CDD" id="cd18578">
    <property type="entry name" value="ABC_6TM_Pgp_ABCB1_D2_like"/>
    <property type="match status" value="1"/>
</dbReference>
<dbReference type="CDD" id="cd03249">
    <property type="entry name" value="ABC_MTABC3_MDL1_MDL2"/>
    <property type="match status" value="2"/>
</dbReference>
<dbReference type="FunFam" id="1.20.1560.10:FF:000018">
    <property type="entry name" value="ATP-binding cassette subfamily B member 11"/>
    <property type="match status" value="1"/>
</dbReference>
<dbReference type="FunFam" id="1.20.1560.10:FF:000046">
    <property type="entry name" value="ATP-binding cassette subfamily B member 11"/>
    <property type="match status" value="1"/>
</dbReference>
<dbReference type="FunFam" id="1.20.1560.10:FF:000051">
    <property type="entry name" value="ATP-binding cassette subfamily B member 11"/>
    <property type="match status" value="1"/>
</dbReference>
<dbReference type="FunFam" id="3.40.50.300:FF:000479">
    <property type="entry name" value="Multidrug resistance protein 1A"/>
    <property type="match status" value="2"/>
</dbReference>
<dbReference type="Gene3D" id="1.20.1560.10">
    <property type="entry name" value="ABC transporter type 1, transmembrane domain"/>
    <property type="match status" value="3"/>
</dbReference>
<dbReference type="Gene3D" id="3.40.50.300">
    <property type="entry name" value="P-loop containing nucleotide triphosphate hydrolases"/>
    <property type="match status" value="3"/>
</dbReference>
<dbReference type="InterPro" id="IPR003593">
    <property type="entry name" value="AAA+_ATPase"/>
</dbReference>
<dbReference type="InterPro" id="IPR011527">
    <property type="entry name" value="ABC1_TM_dom"/>
</dbReference>
<dbReference type="InterPro" id="IPR036640">
    <property type="entry name" value="ABC1_TM_sf"/>
</dbReference>
<dbReference type="InterPro" id="IPR003439">
    <property type="entry name" value="ABC_transporter-like_ATP-bd"/>
</dbReference>
<dbReference type="InterPro" id="IPR017871">
    <property type="entry name" value="ABC_transporter-like_CS"/>
</dbReference>
<dbReference type="InterPro" id="IPR027417">
    <property type="entry name" value="P-loop_NTPase"/>
</dbReference>
<dbReference type="InterPro" id="IPR039421">
    <property type="entry name" value="Type_1_exporter"/>
</dbReference>
<dbReference type="PANTHER" id="PTHR43394:SF23">
    <property type="entry name" value="ATP-BINDING CASSETTE SUBFAMILY B MEMBER 11, GENE 2"/>
    <property type="match status" value="1"/>
</dbReference>
<dbReference type="PANTHER" id="PTHR43394">
    <property type="entry name" value="ATP-DEPENDENT PERMEASE MDL1, MITOCHONDRIAL"/>
    <property type="match status" value="1"/>
</dbReference>
<dbReference type="Pfam" id="PF00664">
    <property type="entry name" value="ABC_membrane"/>
    <property type="match status" value="2"/>
</dbReference>
<dbReference type="Pfam" id="PF00005">
    <property type="entry name" value="ABC_tran"/>
    <property type="match status" value="2"/>
</dbReference>
<dbReference type="SMART" id="SM00382">
    <property type="entry name" value="AAA"/>
    <property type="match status" value="2"/>
</dbReference>
<dbReference type="SUPFAM" id="SSF90123">
    <property type="entry name" value="ABC transporter transmembrane region"/>
    <property type="match status" value="2"/>
</dbReference>
<dbReference type="SUPFAM" id="SSF52540">
    <property type="entry name" value="P-loop containing nucleoside triphosphate hydrolases"/>
    <property type="match status" value="2"/>
</dbReference>
<dbReference type="PROSITE" id="PS50929">
    <property type="entry name" value="ABC_TM1F"/>
    <property type="match status" value="2"/>
</dbReference>
<dbReference type="PROSITE" id="PS00211">
    <property type="entry name" value="ABC_TRANSPORTER_1"/>
    <property type="match status" value="1"/>
</dbReference>
<dbReference type="PROSITE" id="PS50893">
    <property type="entry name" value="ABC_TRANSPORTER_2"/>
    <property type="match status" value="2"/>
</dbReference>
<organism>
    <name type="scientific">Rattus norvegicus</name>
    <name type="common">Rat</name>
    <dbReference type="NCBI Taxonomy" id="10116"/>
    <lineage>
        <taxon>Eukaryota</taxon>
        <taxon>Metazoa</taxon>
        <taxon>Chordata</taxon>
        <taxon>Craniata</taxon>
        <taxon>Vertebrata</taxon>
        <taxon>Euteleostomi</taxon>
        <taxon>Mammalia</taxon>
        <taxon>Eutheria</taxon>
        <taxon>Euarchontoglires</taxon>
        <taxon>Glires</taxon>
        <taxon>Rodentia</taxon>
        <taxon>Myomorpha</taxon>
        <taxon>Muroidea</taxon>
        <taxon>Muridae</taxon>
        <taxon>Murinae</taxon>
        <taxon>Rattus</taxon>
    </lineage>
</organism>